<accession>Q20F00</accession>
<dbReference type="EMBL" id="DQ291132">
    <property type="protein sequence ID" value="ABB82006.1"/>
    <property type="molecule type" value="Genomic_DNA"/>
</dbReference>
<dbReference type="RefSeq" id="YP_635845.1">
    <property type="nucleotide sequence ID" value="NC_008099.1"/>
</dbReference>
<dbReference type="SMR" id="Q20F00"/>
<dbReference type="GeneID" id="4100182"/>
<dbReference type="GO" id="GO:0009507">
    <property type="term" value="C:chloroplast"/>
    <property type="evidence" value="ECO:0007669"/>
    <property type="project" value="UniProtKB-SubCell"/>
</dbReference>
<dbReference type="GO" id="GO:1990904">
    <property type="term" value="C:ribonucleoprotein complex"/>
    <property type="evidence" value="ECO:0007669"/>
    <property type="project" value="UniProtKB-KW"/>
</dbReference>
<dbReference type="GO" id="GO:0005840">
    <property type="term" value="C:ribosome"/>
    <property type="evidence" value="ECO:0007669"/>
    <property type="project" value="UniProtKB-KW"/>
</dbReference>
<dbReference type="GO" id="GO:0003729">
    <property type="term" value="F:mRNA binding"/>
    <property type="evidence" value="ECO:0007669"/>
    <property type="project" value="TreeGrafter"/>
</dbReference>
<dbReference type="GO" id="GO:0003735">
    <property type="term" value="F:structural constituent of ribosome"/>
    <property type="evidence" value="ECO:0007669"/>
    <property type="project" value="InterPro"/>
</dbReference>
<dbReference type="GO" id="GO:0006412">
    <property type="term" value="P:translation"/>
    <property type="evidence" value="ECO:0007669"/>
    <property type="project" value="UniProtKB-UniRule"/>
</dbReference>
<dbReference type="CDD" id="cd00387">
    <property type="entry name" value="Ribosomal_L7_L12"/>
    <property type="match status" value="1"/>
</dbReference>
<dbReference type="FunFam" id="3.30.1390.10:FF:000001">
    <property type="entry name" value="50S ribosomal protein L7/L12"/>
    <property type="match status" value="1"/>
</dbReference>
<dbReference type="Gene3D" id="3.30.1390.10">
    <property type="match status" value="1"/>
</dbReference>
<dbReference type="Gene3D" id="1.20.5.710">
    <property type="entry name" value="Single helix bin"/>
    <property type="match status" value="1"/>
</dbReference>
<dbReference type="HAMAP" id="MF_00368">
    <property type="entry name" value="Ribosomal_bL12"/>
    <property type="match status" value="1"/>
</dbReference>
<dbReference type="InterPro" id="IPR000206">
    <property type="entry name" value="Ribosomal_bL12"/>
</dbReference>
<dbReference type="InterPro" id="IPR013823">
    <property type="entry name" value="Ribosomal_bL12_C"/>
</dbReference>
<dbReference type="InterPro" id="IPR014719">
    <property type="entry name" value="Ribosomal_bL12_C/ClpS-like"/>
</dbReference>
<dbReference type="InterPro" id="IPR008932">
    <property type="entry name" value="Ribosomal_bL12_oligo"/>
</dbReference>
<dbReference type="InterPro" id="IPR036235">
    <property type="entry name" value="Ribosomal_bL12_oligo_N_sf"/>
</dbReference>
<dbReference type="NCBIfam" id="TIGR00855">
    <property type="entry name" value="L12"/>
    <property type="match status" value="1"/>
</dbReference>
<dbReference type="PANTHER" id="PTHR45987">
    <property type="entry name" value="39S RIBOSOMAL PROTEIN L12"/>
    <property type="match status" value="1"/>
</dbReference>
<dbReference type="PANTHER" id="PTHR45987:SF4">
    <property type="entry name" value="LARGE RIBOSOMAL SUBUNIT PROTEIN BL12M"/>
    <property type="match status" value="1"/>
</dbReference>
<dbReference type="Pfam" id="PF00542">
    <property type="entry name" value="Ribosomal_L12"/>
    <property type="match status" value="1"/>
</dbReference>
<dbReference type="Pfam" id="PF16320">
    <property type="entry name" value="Ribosomal_L12_N"/>
    <property type="match status" value="1"/>
</dbReference>
<dbReference type="SUPFAM" id="SSF54736">
    <property type="entry name" value="ClpS-like"/>
    <property type="match status" value="1"/>
</dbReference>
<dbReference type="SUPFAM" id="SSF48300">
    <property type="entry name" value="Ribosomal protein L7/12, oligomerisation (N-terminal) domain"/>
    <property type="match status" value="1"/>
</dbReference>
<evidence type="ECO:0000255" key="1">
    <source>
        <dbReference type="HAMAP-Rule" id="MF_00368"/>
    </source>
</evidence>
<evidence type="ECO:0000305" key="2"/>
<geneLocation type="chloroplast"/>
<organism>
    <name type="scientific">Oltmannsiellopsis viridis</name>
    <name type="common">Marine flagellate</name>
    <name type="synonym">Oltmannsiella viridis</name>
    <dbReference type="NCBI Taxonomy" id="51324"/>
    <lineage>
        <taxon>Eukaryota</taxon>
        <taxon>Viridiplantae</taxon>
        <taxon>Chlorophyta</taxon>
        <taxon>Ulvophyceae</taxon>
        <taxon>Oltmannsiellopsidales</taxon>
        <taxon>Oltmannsiellopsidaceae</taxon>
        <taxon>Oltmannsiellopsis</taxon>
    </lineage>
</organism>
<comment type="function">
    <text evidence="1">Forms part of the ribosomal stalk which helps the ribosome interact with GTP-bound translation factors. Is thus essential for accurate translation.</text>
</comment>
<comment type="subunit">
    <text evidence="1">Homodimer. Part of the ribosomal stalk of the 50S ribosomal subunit. Forms a multimeric L10(L12)X complex, where L10 forms an elongated spine to which 2 to 4 L12 dimers bind in a sequential fashion. Binds GTP-bound translation factors.</text>
</comment>
<comment type="subcellular location">
    <subcellularLocation>
        <location>Plastid</location>
        <location>Chloroplast</location>
    </subcellularLocation>
</comment>
<comment type="similarity">
    <text evidence="1">Belongs to the bacterial ribosomal protein bL12 family.</text>
</comment>
<protein>
    <recommendedName>
        <fullName evidence="1">Large ribosomal subunit protein bL12c</fullName>
    </recommendedName>
    <alternativeName>
        <fullName evidence="2">50S ribosomal protein L12, chloroplastic</fullName>
    </alternativeName>
</protein>
<sequence>MSTTSEIIEKLKTLTLLEAAELVSQIEETFGVDASAPVGGGMVMAVGDAGGAAEEVAEKTTFDVVVEDIPSDKRVAVLKVIRKLTSLGLAEVKAFTNSLPGTLQEGISKEEAETAKTELEAAGAVVKIA</sequence>
<keyword id="KW-0150">Chloroplast</keyword>
<keyword id="KW-0934">Plastid</keyword>
<keyword id="KW-0687">Ribonucleoprotein</keyword>
<keyword id="KW-0689">Ribosomal protein</keyword>
<name>RK12_OLTVI</name>
<proteinExistence type="inferred from homology"/>
<gene>
    <name evidence="1" type="primary">rpl12</name>
</gene>
<reference key="1">
    <citation type="journal article" date="2006" name="BMC Biol.">
        <title>The complete chloroplast DNA sequence of the green alga Oltmannsiellopsis viridis reveals a distinctive quadripartite architecture in the chloroplast genome of early diverging ulvophytes.</title>
        <authorList>
            <person name="Pombert J.-F."/>
            <person name="Lemieux C."/>
            <person name="Turmel M."/>
        </authorList>
    </citation>
    <scope>NUCLEOTIDE SEQUENCE [LARGE SCALE GENOMIC DNA]</scope>
</reference>
<feature type="chain" id="PRO_0000276328" description="Large ribosomal subunit protein bL12c">
    <location>
        <begin position="1"/>
        <end position="129"/>
    </location>
</feature>